<organism>
    <name type="scientific">Geobacillus kaustophilus (strain HTA426)</name>
    <dbReference type="NCBI Taxonomy" id="235909"/>
    <lineage>
        <taxon>Bacteria</taxon>
        <taxon>Bacillati</taxon>
        <taxon>Bacillota</taxon>
        <taxon>Bacilli</taxon>
        <taxon>Bacillales</taxon>
        <taxon>Anoxybacillaceae</taxon>
        <taxon>Geobacillus</taxon>
        <taxon>Geobacillus thermoleovorans group</taxon>
    </lineage>
</organism>
<feature type="chain" id="PRO_1000024083" description="Dihydroorotase">
    <location>
        <begin position="1"/>
        <end position="428"/>
    </location>
</feature>
<feature type="active site" evidence="1">
    <location>
        <position position="306"/>
    </location>
</feature>
<feature type="binding site" evidence="1">
    <location>
        <position position="61"/>
    </location>
    <ligand>
        <name>Zn(2+)</name>
        <dbReference type="ChEBI" id="CHEBI:29105"/>
        <label>1</label>
    </ligand>
</feature>
<feature type="binding site" evidence="1">
    <location>
        <begin position="63"/>
        <end position="65"/>
    </location>
    <ligand>
        <name>substrate</name>
    </ligand>
</feature>
<feature type="binding site" evidence="1">
    <location>
        <position position="63"/>
    </location>
    <ligand>
        <name>Zn(2+)</name>
        <dbReference type="ChEBI" id="CHEBI:29105"/>
        <label>1</label>
    </ligand>
</feature>
<feature type="binding site" evidence="1">
    <location>
        <position position="95"/>
    </location>
    <ligand>
        <name>substrate</name>
    </ligand>
</feature>
<feature type="binding site" evidence="1">
    <location>
        <position position="153"/>
    </location>
    <ligand>
        <name>Zn(2+)</name>
        <dbReference type="ChEBI" id="CHEBI:29105"/>
        <label>1</label>
    </ligand>
</feature>
<feature type="binding site" evidence="1">
    <location>
        <position position="153"/>
    </location>
    <ligand>
        <name>Zn(2+)</name>
        <dbReference type="ChEBI" id="CHEBI:29105"/>
        <label>2</label>
    </ligand>
</feature>
<feature type="binding site" evidence="1">
    <location>
        <position position="180"/>
    </location>
    <ligand>
        <name>Zn(2+)</name>
        <dbReference type="ChEBI" id="CHEBI:29105"/>
        <label>2</label>
    </ligand>
</feature>
<feature type="binding site" evidence="1">
    <location>
        <position position="233"/>
    </location>
    <ligand>
        <name>Zn(2+)</name>
        <dbReference type="ChEBI" id="CHEBI:29105"/>
        <label>2</label>
    </ligand>
</feature>
<feature type="binding site" evidence="1">
    <location>
        <position position="279"/>
    </location>
    <ligand>
        <name>substrate</name>
    </ligand>
</feature>
<feature type="binding site" evidence="1">
    <location>
        <position position="306"/>
    </location>
    <ligand>
        <name>Zn(2+)</name>
        <dbReference type="ChEBI" id="CHEBI:29105"/>
        <label>1</label>
    </ligand>
</feature>
<feature type="binding site" evidence="1">
    <location>
        <position position="310"/>
    </location>
    <ligand>
        <name>substrate</name>
    </ligand>
</feature>
<feature type="binding site" evidence="1">
    <location>
        <begin position="324"/>
        <end position="325"/>
    </location>
    <ligand>
        <name>substrate</name>
    </ligand>
</feature>
<proteinExistence type="inferred from homology"/>
<gene>
    <name evidence="1" type="primary">pyrC</name>
    <name type="ordered locus">GK1150</name>
</gene>
<comment type="function">
    <text evidence="1">Catalyzes the reversible cyclization of carbamoyl aspartate to dihydroorotate.</text>
</comment>
<comment type="catalytic activity">
    <reaction evidence="1">
        <text>(S)-dihydroorotate + H2O = N-carbamoyl-L-aspartate + H(+)</text>
        <dbReference type="Rhea" id="RHEA:24296"/>
        <dbReference type="ChEBI" id="CHEBI:15377"/>
        <dbReference type="ChEBI" id="CHEBI:15378"/>
        <dbReference type="ChEBI" id="CHEBI:30864"/>
        <dbReference type="ChEBI" id="CHEBI:32814"/>
        <dbReference type="EC" id="3.5.2.3"/>
    </reaction>
</comment>
<comment type="cofactor">
    <cofactor evidence="1">
        <name>Zn(2+)</name>
        <dbReference type="ChEBI" id="CHEBI:29105"/>
    </cofactor>
    <text evidence="1">Binds 2 Zn(2+) ions per subunit.</text>
</comment>
<comment type="pathway">
    <text evidence="1">Pyrimidine metabolism; UMP biosynthesis via de novo pathway; (S)-dihydroorotate from bicarbonate: step 3/3.</text>
</comment>
<comment type="similarity">
    <text evidence="1">Belongs to the metallo-dependent hydrolases superfamily. DHOase family. Class I DHOase subfamily.</text>
</comment>
<sequence>MGVWLKNGMSFNKDGELMRTHIKIEHGTIAAILYEQPLEANEEDVIDVGGRLIVPGLIDLHVHLREPGGEAKETIETGTLAAAKGGFTTVAAMPNTNPAPDRKEQMEWLQARIRETARVNVLPYAAITIGQKGEELTDFAALKEAGAFAFTDDGVGVQSAGMMFEAMKQAAALDMAIVAHCEDDTLTNGGAVHDGEFARRYGLRGIPSVCEAVHIARDVLLAEAAGCHYHVCHISTKESVRVVRDAKRAGIRVTAEVTPHHLLLCDEDIPGLDANYKMNPPLRSREDRDALIEGLLDGTIDFIATDHAPHTAAEKAKGIEAAPFGIVGLETAFPLLYTHFVKTGVFTLKQLVDWLTIKPAQCFGLKAGRLAVGAPADIAVIDLETEEAIDPETFASKGKNTPFAGWVCQGWPVMTFVGGTLVWEKGRA</sequence>
<keyword id="KW-0378">Hydrolase</keyword>
<keyword id="KW-0479">Metal-binding</keyword>
<keyword id="KW-0665">Pyrimidine biosynthesis</keyword>
<keyword id="KW-1185">Reference proteome</keyword>
<keyword id="KW-0862">Zinc</keyword>
<name>PYRC_GEOKA</name>
<evidence type="ECO:0000255" key="1">
    <source>
        <dbReference type="HAMAP-Rule" id="MF_00220"/>
    </source>
</evidence>
<accession>Q5L0U5</accession>
<protein>
    <recommendedName>
        <fullName evidence="1">Dihydroorotase</fullName>
        <shortName evidence="1">DHOase</shortName>
        <ecNumber evidence="1">3.5.2.3</ecNumber>
    </recommendedName>
</protein>
<reference key="1">
    <citation type="journal article" date="2004" name="Nucleic Acids Res.">
        <title>Thermoadaptation trait revealed by the genome sequence of thermophilic Geobacillus kaustophilus.</title>
        <authorList>
            <person name="Takami H."/>
            <person name="Takaki Y."/>
            <person name="Chee G.-J."/>
            <person name="Nishi S."/>
            <person name="Shimamura S."/>
            <person name="Suzuki H."/>
            <person name="Matsui S."/>
            <person name="Uchiyama I."/>
        </authorList>
    </citation>
    <scope>NUCLEOTIDE SEQUENCE [LARGE SCALE GENOMIC DNA]</scope>
    <source>
        <strain>HTA426</strain>
    </source>
</reference>
<dbReference type="EC" id="3.5.2.3" evidence="1"/>
<dbReference type="EMBL" id="BA000043">
    <property type="protein sequence ID" value="BAD75435.1"/>
    <property type="molecule type" value="Genomic_DNA"/>
</dbReference>
<dbReference type="RefSeq" id="WP_011230650.1">
    <property type="nucleotide sequence ID" value="NC_006510.1"/>
</dbReference>
<dbReference type="SMR" id="Q5L0U5"/>
<dbReference type="STRING" id="235909.GK1150"/>
<dbReference type="KEGG" id="gka:GK1150"/>
<dbReference type="eggNOG" id="COG0044">
    <property type="taxonomic scope" value="Bacteria"/>
</dbReference>
<dbReference type="HOGENOM" id="CLU_015572_1_0_9"/>
<dbReference type="UniPathway" id="UPA00070">
    <property type="reaction ID" value="UER00117"/>
</dbReference>
<dbReference type="Proteomes" id="UP000001172">
    <property type="component" value="Chromosome"/>
</dbReference>
<dbReference type="GO" id="GO:0005737">
    <property type="term" value="C:cytoplasm"/>
    <property type="evidence" value="ECO:0007669"/>
    <property type="project" value="TreeGrafter"/>
</dbReference>
<dbReference type="GO" id="GO:0004038">
    <property type="term" value="F:allantoinase activity"/>
    <property type="evidence" value="ECO:0007669"/>
    <property type="project" value="TreeGrafter"/>
</dbReference>
<dbReference type="GO" id="GO:0004151">
    <property type="term" value="F:dihydroorotase activity"/>
    <property type="evidence" value="ECO:0007669"/>
    <property type="project" value="UniProtKB-UniRule"/>
</dbReference>
<dbReference type="GO" id="GO:0008270">
    <property type="term" value="F:zinc ion binding"/>
    <property type="evidence" value="ECO:0007669"/>
    <property type="project" value="UniProtKB-UniRule"/>
</dbReference>
<dbReference type="GO" id="GO:0044205">
    <property type="term" value="P:'de novo' UMP biosynthetic process"/>
    <property type="evidence" value="ECO:0007669"/>
    <property type="project" value="UniProtKB-UniRule"/>
</dbReference>
<dbReference type="GO" id="GO:0006145">
    <property type="term" value="P:purine nucleobase catabolic process"/>
    <property type="evidence" value="ECO:0007669"/>
    <property type="project" value="TreeGrafter"/>
</dbReference>
<dbReference type="CDD" id="cd01317">
    <property type="entry name" value="DHOase_IIa"/>
    <property type="match status" value="1"/>
</dbReference>
<dbReference type="Gene3D" id="3.20.20.140">
    <property type="entry name" value="Metal-dependent hydrolases"/>
    <property type="match status" value="1"/>
</dbReference>
<dbReference type="Gene3D" id="2.30.40.10">
    <property type="entry name" value="Urease, subunit C, domain 1"/>
    <property type="match status" value="1"/>
</dbReference>
<dbReference type="HAMAP" id="MF_00220_B">
    <property type="entry name" value="PyrC_classI_B"/>
    <property type="match status" value="1"/>
</dbReference>
<dbReference type="InterPro" id="IPR004722">
    <property type="entry name" value="DHOase"/>
</dbReference>
<dbReference type="InterPro" id="IPR050138">
    <property type="entry name" value="DHOase/Allantoinase_Hydrolase"/>
</dbReference>
<dbReference type="InterPro" id="IPR024403">
    <property type="entry name" value="DHOase_bac"/>
</dbReference>
<dbReference type="InterPro" id="IPR002195">
    <property type="entry name" value="Dihydroorotase_CS"/>
</dbReference>
<dbReference type="InterPro" id="IPR011059">
    <property type="entry name" value="Metal-dep_hydrolase_composite"/>
</dbReference>
<dbReference type="InterPro" id="IPR032466">
    <property type="entry name" value="Metal_Hydrolase"/>
</dbReference>
<dbReference type="NCBIfam" id="NF006837">
    <property type="entry name" value="PRK09357.1-2"/>
    <property type="match status" value="1"/>
</dbReference>
<dbReference type="NCBIfam" id="TIGR00857">
    <property type="entry name" value="pyrC_multi"/>
    <property type="match status" value="1"/>
</dbReference>
<dbReference type="PANTHER" id="PTHR43668">
    <property type="entry name" value="ALLANTOINASE"/>
    <property type="match status" value="1"/>
</dbReference>
<dbReference type="PANTHER" id="PTHR43668:SF2">
    <property type="entry name" value="ALLANTOINASE"/>
    <property type="match status" value="1"/>
</dbReference>
<dbReference type="Pfam" id="PF12890">
    <property type="entry name" value="DHOase"/>
    <property type="match status" value="1"/>
</dbReference>
<dbReference type="SUPFAM" id="SSF51338">
    <property type="entry name" value="Composite domain of metallo-dependent hydrolases"/>
    <property type="match status" value="1"/>
</dbReference>
<dbReference type="SUPFAM" id="SSF51556">
    <property type="entry name" value="Metallo-dependent hydrolases"/>
    <property type="match status" value="1"/>
</dbReference>
<dbReference type="PROSITE" id="PS00482">
    <property type="entry name" value="DIHYDROOROTASE_1"/>
    <property type="match status" value="1"/>
</dbReference>
<dbReference type="PROSITE" id="PS00483">
    <property type="entry name" value="DIHYDROOROTASE_2"/>
    <property type="match status" value="1"/>
</dbReference>